<accession>P81350</accession>
<protein>
    <recommendedName>
        <fullName>Elongation factor G</fullName>
        <shortName>EF-G</shortName>
    </recommendedName>
    <alternativeName>
        <fullName>CP 5</fullName>
    </alternativeName>
</protein>
<proteinExistence type="evidence at protein level"/>
<gene>
    <name type="primary">fusA</name>
</gene>
<evidence type="ECO:0000250" key="1"/>
<evidence type="ECO:0000305" key="2"/>
<sequence>KYPLEKFQNIG</sequence>
<dbReference type="GO" id="GO:0005737">
    <property type="term" value="C:cytoplasm"/>
    <property type="evidence" value="ECO:0007669"/>
    <property type="project" value="UniProtKB-SubCell"/>
</dbReference>
<dbReference type="GO" id="GO:0005525">
    <property type="term" value="F:GTP binding"/>
    <property type="evidence" value="ECO:0007669"/>
    <property type="project" value="UniProtKB-KW"/>
</dbReference>
<dbReference type="GO" id="GO:0003746">
    <property type="term" value="F:translation elongation factor activity"/>
    <property type="evidence" value="ECO:0007669"/>
    <property type="project" value="UniProtKB-KW"/>
</dbReference>
<reference key="1">
    <citation type="journal article" date="1998" name="Electrophoresis">
        <title>Two-dimensional gel electrophoresis separation and N-terminal sequence analysis of proteins from Clostridium pasteurianum W5.</title>
        <authorList>
            <person name="Flengsrud R."/>
            <person name="Skjeldal L."/>
        </authorList>
    </citation>
    <scope>PROTEIN SEQUENCE</scope>
    <source>
        <strain>ATCC 6013 / DSM 525 / NCIB 9486 / VKM B-1774 / W5</strain>
    </source>
</reference>
<organism>
    <name type="scientific">Clostridium pasteurianum</name>
    <dbReference type="NCBI Taxonomy" id="1501"/>
    <lineage>
        <taxon>Bacteria</taxon>
        <taxon>Bacillati</taxon>
        <taxon>Bacillota</taxon>
        <taxon>Clostridia</taxon>
        <taxon>Eubacteriales</taxon>
        <taxon>Clostridiaceae</taxon>
        <taxon>Clostridium</taxon>
    </lineage>
</organism>
<comment type="function">
    <text evidence="1">Catalyzes the GTP-dependent ribosomal translocation step during translation elongation. During this step, the ribosome changes from the pre-translocational (PRE) to the post-translocational (POST) state as the newly formed A-site-bound peptidyl-tRNA and P-site-bound deacylated tRNA move to the P and E sites, respectively. Catalyzes the coordinated movement of the two tRNA molecules, the mRNA and conformational changes in the ribosome (By similarity).</text>
</comment>
<comment type="subcellular location">
    <subcellularLocation>
        <location evidence="1">Cytoplasm</location>
    </subcellularLocation>
</comment>
<comment type="similarity">
    <text evidence="2">Belongs to the GTP-binding elongation factor family. EF-G/EF-2 subfamily.</text>
</comment>
<name>EFG_CLOPA</name>
<feature type="chain" id="PRO_0000091108" description="Elongation factor G">
    <location>
        <begin position="1"/>
        <end position="11" status="greater than"/>
    </location>
</feature>
<feature type="non-terminal residue">
    <location>
        <position position="11"/>
    </location>
</feature>
<keyword id="KW-0963">Cytoplasm</keyword>
<keyword id="KW-0903">Direct protein sequencing</keyword>
<keyword id="KW-0251">Elongation factor</keyword>
<keyword id="KW-0342">GTP-binding</keyword>
<keyword id="KW-0547">Nucleotide-binding</keyword>
<keyword id="KW-0648">Protein biosynthesis</keyword>